<dbReference type="EC" id="2.7.7.4" evidence="1"/>
<dbReference type="EMBL" id="CP000860">
    <property type="protein sequence ID" value="ACA59588.1"/>
    <property type="molecule type" value="Genomic_DNA"/>
</dbReference>
<dbReference type="RefSeq" id="WP_012302174.1">
    <property type="nucleotide sequence ID" value="NC_010424.1"/>
</dbReference>
<dbReference type="SMR" id="B1I3M7"/>
<dbReference type="STRING" id="477974.Daud_1076"/>
<dbReference type="KEGG" id="dau:Daud_1076"/>
<dbReference type="eggNOG" id="COG2046">
    <property type="taxonomic scope" value="Bacteria"/>
</dbReference>
<dbReference type="HOGENOM" id="CLU_022950_1_1_9"/>
<dbReference type="OrthoDB" id="9804504at2"/>
<dbReference type="UniPathway" id="UPA00140">
    <property type="reaction ID" value="UER00204"/>
</dbReference>
<dbReference type="Proteomes" id="UP000008544">
    <property type="component" value="Chromosome"/>
</dbReference>
<dbReference type="GO" id="GO:0005524">
    <property type="term" value="F:ATP binding"/>
    <property type="evidence" value="ECO:0007669"/>
    <property type="project" value="UniProtKB-KW"/>
</dbReference>
<dbReference type="GO" id="GO:0004781">
    <property type="term" value="F:sulfate adenylyltransferase (ATP) activity"/>
    <property type="evidence" value="ECO:0007669"/>
    <property type="project" value="UniProtKB-UniRule"/>
</dbReference>
<dbReference type="GO" id="GO:0070814">
    <property type="term" value="P:hydrogen sulfide biosynthetic process"/>
    <property type="evidence" value="ECO:0007669"/>
    <property type="project" value="UniProtKB-UniRule"/>
</dbReference>
<dbReference type="GO" id="GO:0000103">
    <property type="term" value="P:sulfate assimilation"/>
    <property type="evidence" value="ECO:0007669"/>
    <property type="project" value="UniProtKB-UniRule"/>
</dbReference>
<dbReference type="CDD" id="cd00517">
    <property type="entry name" value="ATPS"/>
    <property type="match status" value="1"/>
</dbReference>
<dbReference type="Gene3D" id="3.40.50.620">
    <property type="entry name" value="HUPs"/>
    <property type="match status" value="1"/>
</dbReference>
<dbReference type="Gene3D" id="3.10.400.10">
    <property type="entry name" value="Sulfate adenylyltransferase"/>
    <property type="match status" value="1"/>
</dbReference>
<dbReference type="HAMAP" id="MF_00066">
    <property type="entry name" value="Sulf_adenylyltr"/>
    <property type="match status" value="1"/>
</dbReference>
<dbReference type="InterPro" id="IPR025980">
    <property type="entry name" value="ATP-Sase_PUA-like_dom"/>
</dbReference>
<dbReference type="InterPro" id="IPR015947">
    <property type="entry name" value="PUA-like_sf"/>
</dbReference>
<dbReference type="InterPro" id="IPR014729">
    <property type="entry name" value="Rossmann-like_a/b/a_fold"/>
</dbReference>
<dbReference type="InterPro" id="IPR020792">
    <property type="entry name" value="SO4_adenylyltransferase_pro"/>
</dbReference>
<dbReference type="InterPro" id="IPR024951">
    <property type="entry name" value="Sulfurylase_cat_dom"/>
</dbReference>
<dbReference type="InterPro" id="IPR002650">
    <property type="entry name" value="Sulphate_adenylyltransferase"/>
</dbReference>
<dbReference type="NCBIfam" id="NF003166">
    <property type="entry name" value="PRK04149.1"/>
    <property type="match status" value="1"/>
</dbReference>
<dbReference type="NCBIfam" id="TIGR00339">
    <property type="entry name" value="sopT"/>
    <property type="match status" value="1"/>
</dbReference>
<dbReference type="PANTHER" id="PTHR43509">
    <property type="match status" value="1"/>
</dbReference>
<dbReference type="PANTHER" id="PTHR43509:SF1">
    <property type="entry name" value="SULFATE ADENYLYLTRANSFERASE"/>
    <property type="match status" value="1"/>
</dbReference>
<dbReference type="Pfam" id="PF01747">
    <property type="entry name" value="ATP-sulfurylase"/>
    <property type="match status" value="1"/>
</dbReference>
<dbReference type="Pfam" id="PF14306">
    <property type="entry name" value="PUA_2"/>
    <property type="match status" value="1"/>
</dbReference>
<dbReference type="SUPFAM" id="SSF52374">
    <property type="entry name" value="Nucleotidylyl transferase"/>
    <property type="match status" value="1"/>
</dbReference>
<dbReference type="SUPFAM" id="SSF88697">
    <property type="entry name" value="PUA domain-like"/>
    <property type="match status" value="1"/>
</dbReference>
<organism>
    <name type="scientific">Desulforudis audaxviator (strain MP104C)</name>
    <dbReference type="NCBI Taxonomy" id="477974"/>
    <lineage>
        <taxon>Bacteria</taxon>
        <taxon>Bacillati</taxon>
        <taxon>Bacillota</taxon>
        <taxon>Clostridia</taxon>
        <taxon>Thermoanaerobacterales</taxon>
        <taxon>Candidatus Desulforudaceae</taxon>
        <taxon>Candidatus Desulforudis</taxon>
    </lineage>
</organism>
<feature type="chain" id="PRO_1000092256" description="Sulfate adenylyltransferase">
    <location>
        <begin position="1"/>
        <end position="420"/>
    </location>
</feature>
<accession>B1I3M7</accession>
<sequence length="420" mass="47171">MALPNPHGPEKKLMPLFLEGEAREAEIARAASLPKVYMTSMETSDILMLGMGAFTPLKGFMNKAEWQGCVFDLKLPDGTMWPMPVTLSISAAELEASGIKEGSDVALIDRESGELYATMNIEEIYQIDKMAQAKEVFKTDDAEGHPGVAKTFAQGEYNLGGPIKALNEGKYHEIYPKYYLYPAQTRALFESKGWSRVVAFQTRNPMHRSHEYLVKFALESGFVDGAMIHAIVGALKAGDIPGETRVKCYEALVDNYFPRENIALAVYPMEMRYGGPREALLHAVFRQNFGCRYLIVGRDHAGVGSYYGPFDAQTIFDELWPGALELGPMKINWTFYCYKCESMASLMTCPHGKEDRVIVSGTQFRRAMQEGAELPKEFGRPEVLAILEEYYRTAEKVEIKKHAYEDLTPEMLAKIKEGKK</sequence>
<protein>
    <recommendedName>
        <fullName evidence="1">Sulfate adenylyltransferase</fullName>
        <ecNumber evidence="1">2.7.7.4</ecNumber>
    </recommendedName>
    <alternativeName>
        <fullName evidence="1">ATP-sulfurylase</fullName>
    </alternativeName>
    <alternativeName>
        <fullName evidence="1">Sulfate adenylate transferase</fullName>
        <shortName evidence="1">SAT</shortName>
    </alternativeName>
</protein>
<proteinExistence type="inferred from homology"/>
<keyword id="KW-0067">ATP-binding</keyword>
<keyword id="KW-0547">Nucleotide-binding</keyword>
<keyword id="KW-0548">Nucleotidyltransferase</keyword>
<keyword id="KW-1185">Reference proteome</keyword>
<keyword id="KW-0808">Transferase</keyword>
<reference key="1">
    <citation type="submission" date="2007-10" db="EMBL/GenBank/DDBJ databases">
        <title>Complete sequence of chromosome of Desulforudis audaxviator MP104C.</title>
        <authorList>
            <person name="Copeland A."/>
            <person name="Lucas S."/>
            <person name="Lapidus A."/>
            <person name="Barry K."/>
            <person name="Glavina del Rio T."/>
            <person name="Dalin E."/>
            <person name="Tice H."/>
            <person name="Bruce D."/>
            <person name="Pitluck S."/>
            <person name="Lowry S.R."/>
            <person name="Larimer F."/>
            <person name="Land M.L."/>
            <person name="Hauser L."/>
            <person name="Kyrpides N."/>
            <person name="Ivanova N.N."/>
            <person name="Richardson P."/>
        </authorList>
    </citation>
    <scope>NUCLEOTIDE SEQUENCE [LARGE SCALE GENOMIC DNA]</scope>
    <source>
        <strain>MP104C</strain>
    </source>
</reference>
<name>SAT_DESAP</name>
<comment type="catalytic activity">
    <reaction evidence="1">
        <text>sulfate + ATP + H(+) = adenosine 5'-phosphosulfate + diphosphate</text>
        <dbReference type="Rhea" id="RHEA:18133"/>
        <dbReference type="ChEBI" id="CHEBI:15378"/>
        <dbReference type="ChEBI" id="CHEBI:16189"/>
        <dbReference type="ChEBI" id="CHEBI:30616"/>
        <dbReference type="ChEBI" id="CHEBI:33019"/>
        <dbReference type="ChEBI" id="CHEBI:58243"/>
        <dbReference type="EC" id="2.7.7.4"/>
    </reaction>
</comment>
<comment type="pathway">
    <text evidence="1">Sulfur metabolism; hydrogen sulfide biosynthesis; sulfite from sulfate: step 1/3.</text>
</comment>
<comment type="similarity">
    <text evidence="1">Belongs to the sulfate adenylyltransferase family.</text>
</comment>
<evidence type="ECO:0000255" key="1">
    <source>
        <dbReference type="HAMAP-Rule" id="MF_00066"/>
    </source>
</evidence>
<gene>
    <name evidence="1" type="primary">sat</name>
    <name type="ordered locus">Daud_1076</name>
</gene>